<name>ATPE_AEGCR</name>
<organism>
    <name type="scientific">Aegilops crassa</name>
    <name type="common">Persian goatgrass</name>
    <name type="synonym">Triticum crassum</name>
    <dbReference type="NCBI Taxonomy" id="4481"/>
    <lineage>
        <taxon>Eukaryota</taxon>
        <taxon>Viridiplantae</taxon>
        <taxon>Streptophyta</taxon>
        <taxon>Embryophyta</taxon>
        <taxon>Tracheophyta</taxon>
        <taxon>Spermatophyta</taxon>
        <taxon>Magnoliopsida</taxon>
        <taxon>Liliopsida</taxon>
        <taxon>Poales</taxon>
        <taxon>Poaceae</taxon>
        <taxon>BOP clade</taxon>
        <taxon>Pooideae</taxon>
        <taxon>Triticodae</taxon>
        <taxon>Triticeae</taxon>
        <taxon>Triticinae</taxon>
        <taxon>Aegilops</taxon>
    </lineage>
</organism>
<evidence type="ECO:0000255" key="1">
    <source>
        <dbReference type="HAMAP-Rule" id="MF_00530"/>
    </source>
</evidence>
<dbReference type="EMBL" id="D11099">
    <property type="protein sequence ID" value="BAA01873.1"/>
    <property type="molecule type" value="Genomic_DNA"/>
</dbReference>
<dbReference type="SMR" id="P69446"/>
<dbReference type="GO" id="GO:0009535">
    <property type="term" value="C:chloroplast thylakoid membrane"/>
    <property type="evidence" value="ECO:0007669"/>
    <property type="project" value="UniProtKB-SubCell"/>
</dbReference>
<dbReference type="GO" id="GO:0045259">
    <property type="term" value="C:proton-transporting ATP synthase complex"/>
    <property type="evidence" value="ECO:0007669"/>
    <property type="project" value="UniProtKB-KW"/>
</dbReference>
<dbReference type="GO" id="GO:0005524">
    <property type="term" value="F:ATP binding"/>
    <property type="evidence" value="ECO:0007669"/>
    <property type="project" value="UniProtKB-UniRule"/>
</dbReference>
<dbReference type="GO" id="GO:0046933">
    <property type="term" value="F:proton-transporting ATP synthase activity, rotational mechanism"/>
    <property type="evidence" value="ECO:0007669"/>
    <property type="project" value="UniProtKB-UniRule"/>
</dbReference>
<dbReference type="CDD" id="cd12152">
    <property type="entry name" value="F1-ATPase_delta"/>
    <property type="match status" value="1"/>
</dbReference>
<dbReference type="FunFam" id="2.60.15.10:FF:000002">
    <property type="entry name" value="ATP synthase epsilon chain, chloroplastic"/>
    <property type="match status" value="1"/>
</dbReference>
<dbReference type="Gene3D" id="6.10.140.480">
    <property type="match status" value="1"/>
</dbReference>
<dbReference type="Gene3D" id="2.60.15.10">
    <property type="entry name" value="F0F1 ATP synthase delta/epsilon subunit, N-terminal"/>
    <property type="match status" value="1"/>
</dbReference>
<dbReference type="HAMAP" id="MF_00530">
    <property type="entry name" value="ATP_synth_epsil_bac"/>
    <property type="match status" value="1"/>
</dbReference>
<dbReference type="InterPro" id="IPR036794">
    <property type="entry name" value="ATP_F1_dsu/esu_C_sf"/>
</dbReference>
<dbReference type="InterPro" id="IPR001469">
    <property type="entry name" value="ATP_synth_F1_dsu/esu"/>
</dbReference>
<dbReference type="InterPro" id="IPR020546">
    <property type="entry name" value="ATP_synth_F1_dsu/esu_N"/>
</dbReference>
<dbReference type="InterPro" id="IPR020547">
    <property type="entry name" value="ATP_synth_F1_esu_C"/>
</dbReference>
<dbReference type="InterPro" id="IPR036771">
    <property type="entry name" value="ATPsynth_dsu/esu_N"/>
</dbReference>
<dbReference type="NCBIfam" id="TIGR01216">
    <property type="entry name" value="ATP_synt_epsi"/>
    <property type="match status" value="1"/>
</dbReference>
<dbReference type="PANTHER" id="PTHR13822">
    <property type="entry name" value="ATP SYNTHASE DELTA/EPSILON CHAIN"/>
    <property type="match status" value="1"/>
</dbReference>
<dbReference type="PANTHER" id="PTHR13822:SF10">
    <property type="entry name" value="ATP SYNTHASE EPSILON CHAIN, CHLOROPLASTIC"/>
    <property type="match status" value="1"/>
</dbReference>
<dbReference type="Pfam" id="PF00401">
    <property type="entry name" value="ATP-synt_DE"/>
    <property type="match status" value="1"/>
</dbReference>
<dbReference type="Pfam" id="PF02823">
    <property type="entry name" value="ATP-synt_DE_N"/>
    <property type="match status" value="1"/>
</dbReference>
<dbReference type="SUPFAM" id="SSF46604">
    <property type="entry name" value="Epsilon subunit of F1F0-ATP synthase C-terminal domain"/>
    <property type="match status" value="1"/>
</dbReference>
<dbReference type="SUPFAM" id="SSF51344">
    <property type="entry name" value="Epsilon subunit of F1F0-ATP synthase N-terminal domain"/>
    <property type="match status" value="1"/>
</dbReference>
<proteinExistence type="inferred from homology"/>
<protein>
    <recommendedName>
        <fullName evidence="1">ATP synthase epsilon chain, chloroplastic</fullName>
    </recommendedName>
    <alternativeName>
        <fullName evidence="1">ATP synthase F1 sector epsilon subunit</fullName>
    </alternativeName>
    <alternativeName>
        <fullName evidence="1">F-ATPase epsilon subunit</fullName>
    </alternativeName>
</protein>
<comment type="function">
    <text evidence="1">Produces ATP from ADP in the presence of a proton gradient across the membrane.</text>
</comment>
<comment type="subunit">
    <text evidence="1">F-type ATPases have 2 components, CF(1) - the catalytic core - and CF(0) - the membrane proton channel. CF(1) has five subunits: alpha(3), beta(3), gamma(1), delta(1), epsilon(1). CF(0) has three main subunits: a, b and c.</text>
</comment>
<comment type="subcellular location">
    <subcellularLocation>
        <location evidence="1">Plastid</location>
        <location evidence="1">Chloroplast thylakoid membrane</location>
        <topology evidence="1">Peripheral membrane protein</topology>
    </subcellularLocation>
</comment>
<comment type="similarity">
    <text evidence="1">Belongs to the ATPase epsilon chain family.</text>
</comment>
<accession>P69446</accession>
<accession>P00836</accession>
<accession>P20859</accession>
<reference key="1">
    <citation type="journal article" date="1992" name="Jpn. J. Genet.">
        <title>Variations in chloroplast proteins and nucleotide sequences of three chloroplast genes in Triticum and Aegilops.</title>
        <authorList>
            <person name="Ikeda T."/>
            <person name="Terachi T."/>
            <person name="Tsunewaki K."/>
        </authorList>
    </citation>
    <scope>NUCLEOTIDE SEQUENCE [GENOMIC DNA]</scope>
    <source>
        <tissue>Leaf</tissue>
    </source>
</reference>
<feature type="chain" id="PRO_0000188251" description="ATP synthase epsilon chain, chloroplastic">
    <location>
        <begin position="1"/>
        <end position="137"/>
    </location>
</feature>
<geneLocation type="chloroplast"/>
<keyword id="KW-0066">ATP synthesis</keyword>
<keyword id="KW-0139">CF(1)</keyword>
<keyword id="KW-0150">Chloroplast</keyword>
<keyword id="KW-0375">Hydrogen ion transport</keyword>
<keyword id="KW-0406">Ion transport</keyword>
<keyword id="KW-0472">Membrane</keyword>
<keyword id="KW-0934">Plastid</keyword>
<keyword id="KW-0793">Thylakoid</keyword>
<keyword id="KW-0813">Transport</keyword>
<gene>
    <name evidence="1" type="primary">atpE</name>
</gene>
<sequence length="137" mass="15218">MKLNLYVLTPKRIIWDCEVKEIILSTNSGQIGVLPNHAPINTAVDMGPLRIRLLNDQWLTAVLWSGFARIVNNEIIILGNDAELGSDIDPEEAQKALEIAEANLSKAEGTKDLVEAKLALRRARIRIEAVNWIPPSN</sequence>